<sequence>MNPLIIKLGGVLLDSEEALERLFTALVNYREAHQRPLIIVHGGGCVVDELMKQLNLPVKKKNGLRVTPADQIDIITGALAGTANKTLLAWAKKHGISSVGLFLGDGDSVKVTQLDAELGHVGLAQPGSPALINTLLAGGYLPVVSSIGVTDEGQLMNVNADQAATALAATLGADLILLSDVSGILDGKGQRIAEMTAEKAEQLIEQGIITDGMIVKVNAALDAARALGRPVDIASWRHAEQLPALFNGTPIGTRILA</sequence>
<feature type="chain" id="PRO_1000117125" description="Acetylglutamate kinase">
    <location>
        <begin position="1"/>
        <end position="257"/>
    </location>
</feature>
<feature type="binding site" evidence="1">
    <location>
        <begin position="43"/>
        <end position="44"/>
    </location>
    <ligand>
        <name>substrate</name>
    </ligand>
</feature>
<feature type="binding site" evidence="1">
    <location>
        <position position="65"/>
    </location>
    <ligand>
        <name>substrate</name>
    </ligand>
</feature>
<feature type="binding site" evidence="1">
    <location>
        <position position="157"/>
    </location>
    <ligand>
        <name>substrate</name>
    </ligand>
</feature>
<feature type="binding site" evidence="1">
    <location>
        <begin position="180"/>
        <end position="185"/>
    </location>
    <ligand>
        <name>ATP</name>
        <dbReference type="ChEBI" id="CHEBI:30616"/>
    </ligand>
</feature>
<feature type="binding site" evidence="1">
    <location>
        <begin position="208"/>
        <end position="210"/>
    </location>
    <ligand>
        <name>ATP</name>
        <dbReference type="ChEBI" id="CHEBI:30616"/>
    </ligand>
</feature>
<feature type="site" description="Transition state stabilizer" evidence="1">
    <location>
        <position position="7"/>
    </location>
</feature>
<feature type="site" description="Transition state stabilizer" evidence="1">
    <location>
        <position position="216"/>
    </location>
</feature>
<protein>
    <recommendedName>
        <fullName evidence="1">Acetylglutamate kinase</fullName>
        <ecNumber evidence="1">2.7.2.8</ecNumber>
    </recommendedName>
    <alternativeName>
        <fullName evidence="1">N-acetyl-L-glutamate 5-phosphotransferase</fullName>
    </alternativeName>
    <alternativeName>
        <fullName evidence="1">NAG kinase</fullName>
        <shortName evidence="1">NAGK</shortName>
    </alternativeName>
</protein>
<gene>
    <name evidence="1" type="primary">argB</name>
    <name type="ordered locus">KPK_5433</name>
</gene>
<organism>
    <name type="scientific">Klebsiella pneumoniae (strain 342)</name>
    <dbReference type="NCBI Taxonomy" id="507522"/>
    <lineage>
        <taxon>Bacteria</taxon>
        <taxon>Pseudomonadati</taxon>
        <taxon>Pseudomonadota</taxon>
        <taxon>Gammaproteobacteria</taxon>
        <taxon>Enterobacterales</taxon>
        <taxon>Enterobacteriaceae</taxon>
        <taxon>Klebsiella/Raoultella group</taxon>
        <taxon>Klebsiella</taxon>
        <taxon>Klebsiella pneumoniae complex</taxon>
    </lineage>
</organism>
<name>ARGB_KLEP3</name>
<evidence type="ECO:0000255" key="1">
    <source>
        <dbReference type="HAMAP-Rule" id="MF_00082"/>
    </source>
</evidence>
<accession>B5XZ17</accession>
<reference key="1">
    <citation type="journal article" date="2008" name="PLoS Genet.">
        <title>Complete genome sequence of the N2-fixing broad host range endophyte Klebsiella pneumoniae 342 and virulence predictions verified in mice.</title>
        <authorList>
            <person name="Fouts D.E."/>
            <person name="Tyler H.L."/>
            <person name="DeBoy R.T."/>
            <person name="Daugherty S."/>
            <person name="Ren Q."/>
            <person name="Badger J.H."/>
            <person name="Durkin A.S."/>
            <person name="Huot H."/>
            <person name="Shrivastava S."/>
            <person name="Kothari S."/>
            <person name="Dodson R.J."/>
            <person name="Mohamoud Y."/>
            <person name="Khouri H."/>
            <person name="Roesch L.F.W."/>
            <person name="Krogfelt K.A."/>
            <person name="Struve C."/>
            <person name="Triplett E.W."/>
            <person name="Methe B.A."/>
        </authorList>
    </citation>
    <scope>NUCLEOTIDE SEQUENCE [LARGE SCALE GENOMIC DNA]</scope>
    <source>
        <strain>342</strain>
    </source>
</reference>
<proteinExistence type="inferred from homology"/>
<comment type="function">
    <text evidence="1">Catalyzes the ATP-dependent phosphorylation of N-acetyl-L-glutamate.</text>
</comment>
<comment type="catalytic activity">
    <reaction evidence="1">
        <text>N-acetyl-L-glutamate + ATP = N-acetyl-L-glutamyl 5-phosphate + ADP</text>
        <dbReference type="Rhea" id="RHEA:14629"/>
        <dbReference type="ChEBI" id="CHEBI:30616"/>
        <dbReference type="ChEBI" id="CHEBI:44337"/>
        <dbReference type="ChEBI" id="CHEBI:57936"/>
        <dbReference type="ChEBI" id="CHEBI:456216"/>
        <dbReference type="EC" id="2.7.2.8"/>
    </reaction>
</comment>
<comment type="pathway">
    <text evidence="1">Amino-acid biosynthesis; L-arginine biosynthesis; N(2)-acetyl-L-ornithine from L-glutamate: step 2/4.</text>
</comment>
<comment type="subunit">
    <text evidence="1">Homodimer.</text>
</comment>
<comment type="subcellular location">
    <subcellularLocation>
        <location evidence="1">Cytoplasm</location>
    </subcellularLocation>
</comment>
<comment type="similarity">
    <text evidence="1">Belongs to the acetylglutamate kinase family. ArgB subfamily.</text>
</comment>
<keyword id="KW-0028">Amino-acid biosynthesis</keyword>
<keyword id="KW-0055">Arginine biosynthesis</keyword>
<keyword id="KW-0067">ATP-binding</keyword>
<keyword id="KW-0963">Cytoplasm</keyword>
<keyword id="KW-0418">Kinase</keyword>
<keyword id="KW-0547">Nucleotide-binding</keyword>
<keyword id="KW-0808">Transferase</keyword>
<dbReference type="EC" id="2.7.2.8" evidence="1"/>
<dbReference type="EMBL" id="CP000964">
    <property type="protein sequence ID" value="ACI10659.1"/>
    <property type="molecule type" value="Genomic_DNA"/>
</dbReference>
<dbReference type="SMR" id="B5XZ17"/>
<dbReference type="KEGG" id="kpe:KPK_5433"/>
<dbReference type="HOGENOM" id="CLU_053680_1_1_6"/>
<dbReference type="UniPathway" id="UPA00068">
    <property type="reaction ID" value="UER00107"/>
</dbReference>
<dbReference type="Proteomes" id="UP000001734">
    <property type="component" value="Chromosome"/>
</dbReference>
<dbReference type="GO" id="GO:0005737">
    <property type="term" value="C:cytoplasm"/>
    <property type="evidence" value="ECO:0007669"/>
    <property type="project" value="UniProtKB-SubCell"/>
</dbReference>
<dbReference type="GO" id="GO:0003991">
    <property type="term" value="F:acetylglutamate kinase activity"/>
    <property type="evidence" value="ECO:0007669"/>
    <property type="project" value="UniProtKB-UniRule"/>
</dbReference>
<dbReference type="GO" id="GO:0005524">
    <property type="term" value="F:ATP binding"/>
    <property type="evidence" value="ECO:0007669"/>
    <property type="project" value="UniProtKB-UniRule"/>
</dbReference>
<dbReference type="GO" id="GO:0042450">
    <property type="term" value="P:arginine biosynthetic process via ornithine"/>
    <property type="evidence" value="ECO:0007669"/>
    <property type="project" value="UniProtKB-UniRule"/>
</dbReference>
<dbReference type="GO" id="GO:0006526">
    <property type="term" value="P:L-arginine biosynthetic process"/>
    <property type="evidence" value="ECO:0007669"/>
    <property type="project" value="UniProtKB-UniPathway"/>
</dbReference>
<dbReference type="CDD" id="cd04249">
    <property type="entry name" value="AAK_NAGK-NC"/>
    <property type="match status" value="1"/>
</dbReference>
<dbReference type="FunFam" id="3.40.1160.10:FF:000008">
    <property type="entry name" value="Acetylglutamate kinase"/>
    <property type="match status" value="1"/>
</dbReference>
<dbReference type="Gene3D" id="3.40.1160.10">
    <property type="entry name" value="Acetylglutamate kinase-like"/>
    <property type="match status" value="1"/>
</dbReference>
<dbReference type="HAMAP" id="MF_00082">
    <property type="entry name" value="ArgB"/>
    <property type="match status" value="1"/>
</dbReference>
<dbReference type="InterPro" id="IPR036393">
    <property type="entry name" value="AceGlu_kinase-like_sf"/>
</dbReference>
<dbReference type="InterPro" id="IPR004662">
    <property type="entry name" value="AcgluKinase_fam"/>
</dbReference>
<dbReference type="InterPro" id="IPR037528">
    <property type="entry name" value="ArgB"/>
</dbReference>
<dbReference type="InterPro" id="IPR001048">
    <property type="entry name" value="Asp/Glu/Uridylate_kinase"/>
</dbReference>
<dbReference type="InterPro" id="IPR041731">
    <property type="entry name" value="NAGK-NC"/>
</dbReference>
<dbReference type="NCBIfam" id="TIGR00761">
    <property type="entry name" value="argB"/>
    <property type="match status" value="1"/>
</dbReference>
<dbReference type="PANTHER" id="PTHR23342">
    <property type="entry name" value="N-ACETYLGLUTAMATE SYNTHASE"/>
    <property type="match status" value="1"/>
</dbReference>
<dbReference type="PANTHER" id="PTHR23342:SF0">
    <property type="entry name" value="N-ACETYLGLUTAMATE SYNTHASE, MITOCHONDRIAL"/>
    <property type="match status" value="1"/>
</dbReference>
<dbReference type="Pfam" id="PF00696">
    <property type="entry name" value="AA_kinase"/>
    <property type="match status" value="1"/>
</dbReference>
<dbReference type="PIRSF" id="PIRSF000728">
    <property type="entry name" value="NAGK"/>
    <property type="match status" value="1"/>
</dbReference>
<dbReference type="SUPFAM" id="SSF53633">
    <property type="entry name" value="Carbamate kinase-like"/>
    <property type="match status" value="1"/>
</dbReference>